<sequence>MRLFLSLPVLVVVLAMVLEGPAPTQAAPEISSTLGRIPDKLKEFGNTLEDKARAAIESMKQSDIPAKTRNWFSETFNKVKEQLKTAFS</sequence>
<protein>
    <recommendedName>
        <fullName>Apolipoprotein C-I</fullName>
        <shortName>Apo-CI</shortName>
        <shortName>ApoC-I</shortName>
    </recommendedName>
    <alternativeName>
        <fullName>Apolipoprotein C1</fullName>
    </alternativeName>
    <component>
        <recommendedName>
            <fullName>Truncated apolipoprotein C-I</fullName>
        </recommendedName>
    </component>
</protein>
<organism>
    <name type="scientific">Phoca vitulina</name>
    <name type="common">Harbor seal</name>
    <dbReference type="NCBI Taxonomy" id="9720"/>
    <lineage>
        <taxon>Eukaryota</taxon>
        <taxon>Metazoa</taxon>
        <taxon>Chordata</taxon>
        <taxon>Craniata</taxon>
        <taxon>Vertebrata</taxon>
        <taxon>Euteleostomi</taxon>
        <taxon>Mammalia</taxon>
        <taxon>Eutheria</taxon>
        <taxon>Laurasiatheria</taxon>
        <taxon>Carnivora</taxon>
        <taxon>Caniformia</taxon>
        <taxon>Pinnipedia</taxon>
        <taxon>Phocidae</taxon>
        <taxon>Phocinae</taxon>
        <taxon>Phoca</taxon>
    </lineage>
</organism>
<proteinExistence type="inferred from homology"/>
<gene>
    <name type="primary">APOC1</name>
</gene>
<evidence type="ECO:0000250" key="1">
    <source>
        <dbReference type="UniProtKB" id="P02654"/>
    </source>
</evidence>
<evidence type="ECO:0000250" key="2">
    <source>
        <dbReference type="UniProtKB" id="P33047"/>
    </source>
</evidence>
<evidence type="ECO:0000250" key="3">
    <source>
        <dbReference type="UniProtKB" id="P86336"/>
    </source>
</evidence>
<evidence type="ECO:0000255" key="4"/>
<evidence type="ECO:0000305" key="5"/>
<dbReference type="EMBL" id="RXNX01012075">
    <property type="status" value="NOT_ANNOTATED_CDS"/>
    <property type="molecule type" value="Genomic_DNA"/>
</dbReference>
<dbReference type="RefSeq" id="XP_032243957.1">
    <property type="nucleotide sequence ID" value="XM_032388066.1"/>
</dbReference>
<dbReference type="SMR" id="P0DTQ8"/>
<dbReference type="GeneID" id="116622000"/>
<dbReference type="GO" id="GO:0034364">
    <property type="term" value="C:high-density lipoprotein particle"/>
    <property type="evidence" value="ECO:0007669"/>
    <property type="project" value="TreeGrafter"/>
</dbReference>
<dbReference type="GO" id="GO:0034361">
    <property type="term" value="C:very-low-density lipoprotein particle"/>
    <property type="evidence" value="ECO:0007669"/>
    <property type="project" value="UniProtKB-KW"/>
</dbReference>
<dbReference type="GO" id="GO:0005504">
    <property type="term" value="F:fatty acid binding"/>
    <property type="evidence" value="ECO:0007669"/>
    <property type="project" value="TreeGrafter"/>
</dbReference>
<dbReference type="GO" id="GO:0004859">
    <property type="term" value="F:phospholipase inhibitor activity"/>
    <property type="evidence" value="ECO:0007669"/>
    <property type="project" value="TreeGrafter"/>
</dbReference>
<dbReference type="GO" id="GO:0006869">
    <property type="term" value="P:lipid transport"/>
    <property type="evidence" value="ECO:0007669"/>
    <property type="project" value="UniProtKB-KW"/>
</dbReference>
<dbReference type="GO" id="GO:0042157">
    <property type="term" value="P:lipoprotein metabolic process"/>
    <property type="evidence" value="ECO:0007669"/>
    <property type="project" value="InterPro"/>
</dbReference>
<dbReference type="GO" id="GO:0032375">
    <property type="term" value="P:negative regulation of cholesterol transport"/>
    <property type="evidence" value="ECO:0007669"/>
    <property type="project" value="TreeGrafter"/>
</dbReference>
<dbReference type="GO" id="GO:0050995">
    <property type="term" value="P:negative regulation of lipid catabolic process"/>
    <property type="evidence" value="ECO:0007669"/>
    <property type="project" value="TreeGrafter"/>
</dbReference>
<dbReference type="GO" id="GO:0010916">
    <property type="term" value="P:negative regulation of very-low-density lipoprotein particle clearance"/>
    <property type="evidence" value="ECO:0007669"/>
    <property type="project" value="TreeGrafter"/>
</dbReference>
<dbReference type="GO" id="GO:0006641">
    <property type="term" value="P:triglyceride metabolic process"/>
    <property type="evidence" value="ECO:0007669"/>
    <property type="project" value="TreeGrafter"/>
</dbReference>
<dbReference type="GO" id="GO:0034447">
    <property type="term" value="P:very-low-density lipoprotein particle clearance"/>
    <property type="evidence" value="ECO:0007669"/>
    <property type="project" value="TreeGrafter"/>
</dbReference>
<dbReference type="Gene3D" id="4.10.260.30">
    <property type="entry name" value="Apolipoprotein C-I"/>
    <property type="match status" value="1"/>
</dbReference>
<dbReference type="InterPro" id="IPR043081">
    <property type="entry name" value="ApoC-1_sf"/>
</dbReference>
<dbReference type="InterPro" id="IPR006781">
    <property type="entry name" value="ApoC-I"/>
</dbReference>
<dbReference type="PANTHER" id="PTHR16565">
    <property type="entry name" value="APOLIPOPROTEIN C-I"/>
    <property type="match status" value="1"/>
</dbReference>
<dbReference type="PANTHER" id="PTHR16565:SF2">
    <property type="entry name" value="APOLIPOPROTEIN C-I"/>
    <property type="match status" value="1"/>
</dbReference>
<dbReference type="Pfam" id="PF04691">
    <property type="entry name" value="ApoC-I"/>
    <property type="match status" value="1"/>
</dbReference>
<comment type="function">
    <text evidence="1 2">Inhibitor of lipoprotein binding to the low density lipoprotein (LDL) receptor, LDL receptor-related protein, and very low density lipoprotein (VLDL) receptor. Associates with high density lipoproteins (HDL) and the triacylglycerol-rich lipoproteins in the plasma and makes up about 10% of the protein of the VLDL and 2% of that of HDL. Appears to interfere directly with fatty acid uptake and is also the major plasma inhibitor of cholesteryl ester transfer protein (CETP). Binds free fatty acids and reduces their intracellular esterification. Modulates the interaction of APOE with beta-migrating VLDL and inhibits binding of beta-VLDL to the LDL receptor-related protein.</text>
</comment>
<comment type="subcellular location">
    <subcellularLocation>
        <location evidence="1">Secreted</location>
    </subcellularLocation>
</comment>
<comment type="similarity">
    <text evidence="5">Belongs to the apolipoprotein C1 family.</text>
</comment>
<name>APOC1_PHOVI</name>
<feature type="signal peptide" evidence="4">
    <location>
        <begin position="1"/>
        <end position="26"/>
    </location>
</feature>
<feature type="chain" id="PRO_0000448506" description="Apolipoprotein C-I">
    <location>
        <begin position="27"/>
        <end position="88"/>
    </location>
</feature>
<feature type="chain" id="PRO_0000448507" description="Truncated apolipoprotein C-I" evidence="3">
    <location>
        <begin position="29"/>
        <end position="88"/>
    </location>
</feature>
<accession>P0DTQ8</accession>
<reference key="1">
    <citation type="submission" date="2018-12" db="EMBL/GenBank/DDBJ databases">
        <authorList>
            <person name="Culibrk L."/>
            <person name="Leelakumari S."/>
            <person name="Taylor G.A."/>
            <person name="Tse K."/>
            <person name="Cheng D."/>
            <person name="Chuah E."/>
            <person name="Kirk H."/>
            <person name="Pandoh P."/>
            <person name="Troussard A."/>
            <person name="Zhao Y."/>
            <person name="Mungall A."/>
            <person name="Moore R."/>
            <person name="Akhurst L."/>
            <person name="Marra M.A."/>
            <person name="Haulena M."/>
            <person name="Jones S.J.M."/>
        </authorList>
    </citation>
    <scope>NUCLEOTIDE SEQUENCE [LARGE SCALE GENOMIC DNA]</scope>
</reference>
<reference key="2">
    <citation type="unpublished observations" date="2019-09">
        <authorList>
            <person name="Puppione D.L."/>
        </authorList>
    </citation>
    <scope>IDENTIFICATION</scope>
</reference>
<keyword id="KW-0445">Lipid transport</keyword>
<keyword id="KW-0964">Secreted</keyword>
<keyword id="KW-0732">Signal</keyword>
<keyword id="KW-0813">Transport</keyword>
<keyword id="KW-0850">VLDL</keyword>